<reference key="1">
    <citation type="submission" date="2007-07" db="EMBL/GenBank/DDBJ databases">
        <title>Complete sequence of Fervidobacterium nodosum Rt17-B1.</title>
        <authorList>
            <consortium name="US DOE Joint Genome Institute"/>
            <person name="Copeland A."/>
            <person name="Lucas S."/>
            <person name="Lapidus A."/>
            <person name="Barry K."/>
            <person name="Glavina del Rio T."/>
            <person name="Dalin E."/>
            <person name="Tice H."/>
            <person name="Pitluck S."/>
            <person name="Saunders E."/>
            <person name="Brettin T."/>
            <person name="Bruce D."/>
            <person name="Detter J.C."/>
            <person name="Han C."/>
            <person name="Schmutz J."/>
            <person name="Larimer F."/>
            <person name="Land M."/>
            <person name="Hauser L."/>
            <person name="Kyrpides N."/>
            <person name="Mikhailova N."/>
            <person name="Nelson K."/>
            <person name="Gogarten J.P."/>
            <person name="Noll K."/>
            <person name="Richardson P."/>
        </authorList>
    </citation>
    <scope>NUCLEOTIDE SEQUENCE [LARGE SCALE GENOMIC DNA]</scope>
    <source>
        <strain>ATCC 35602 / DSM 5306 / Rt17-B1</strain>
    </source>
</reference>
<proteinExistence type="inferred from homology"/>
<evidence type="ECO:0000255" key="1">
    <source>
        <dbReference type="HAMAP-Rule" id="MF_01876"/>
    </source>
</evidence>
<sequence>MIISEKVKKALEDGIPVIALESTVIAHGLPYPHNVETAKMLEEMALENGVVPATIGILKGEIIVGMSQEQINEMLADEPLKIGTREIPYAVGMKKSAATTVSATMRIAKIAGIDVFATGGIGGVHIGDWDVSQDITEMAKSDVIVVSAGCKSILDVKKTIEFLETFQVTVVGYKTNKFPIFYEGLSDFNLEHRVDSPEDIAKIFRAKKSLGIEGALLVANPIPQEFVISEQEVDGYMKQALSECFEKGITGKAVTPYLLSRIAQLSNGKTLTSNIELLKNNVLLACQIAKSLKTMA</sequence>
<gene>
    <name evidence="1" type="primary">psuG</name>
    <name type="ordered locus">Fnod_1187</name>
</gene>
<keyword id="KW-0326">Glycosidase</keyword>
<keyword id="KW-0378">Hydrolase</keyword>
<keyword id="KW-0456">Lyase</keyword>
<keyword id="KW-0464">Manganese</keyword>
<keyword id="KW-0479">Metal-binding</keyword>
<keyword id="KW-1185">Reference proteome</keyword>
<name>PSUG_FERNB</name>
<comment type="function">
    <text evidence="1">Catalyzes the reversible cleavage of pseudouridine 5'-phosphate (PsiMP) to ribose 5-phosphate and uracil. Functions biologically in the cleavage direction, as part of a pseudouridine degradation pathway.</text>
</comment>
<comment type="catalytic activity">
    <reaction evidence="1">
        <text>D-ribose 5-phosphate + uracil = psi-UMP + H2O</text>
        <dbReference type="Rhea" id="RHEA:18337"/>
        <dbReference type="ChEBI" id="CHEBI:15377"/>
        <dbReference type="ChEBI" id="CHEBI:17568"/>
        <dbReference type="ChEBI" id="CHEBI:58380"/>
        <dbReference type="ChEBI" id="CHEBI:78346"/>
        <dbReference type="EC" id="4.2.1.70"/>
    </reaction>
</comment>
<comment type="cofactor">
    <cofactor evidence="1">
        <name>Mn(2+)</name>
        <dbReference type="ChEBI" id="CHEBI:29035"/>
    </cofactor>
    <text evidence="1">Binds 1 Mn(2+) ion per subunit.</text>
</comment>
<comment type="subunit">
    <text evidence="1">Homotrimer.</text>
</comment>
<comment type="similarity">
    <text evidence="1">Belongs to the pseudouridine-5'-phosphate glycosidase family.</text>
</comment>
<feature type="chain" id="PRO_0000390518" description="Pseudouridine-5'-phosphate glycosidase">
    <location>
        <begin position="1"/>
        <end position="296"/>
    </location>
</feature>
<feature type="active site" description="Proton donor" evidence="1">
    <location>
        <position position="21"/>
    </location>
</feature>
<feature type="active site" description="Nucleophile" evidence="1">
    <location>
        <position position="151"/>
    </location>
</feature>
<feature type="binding site" evidence="1">
    <location>
        <position position="81"/>
    </location>
    <ligand>
        <name>substrate</name>
    </ligand>
</feature>
<feature type="binding site" evidence="1">
    <location>
        <position position="101"/>
    </location>
    <ligand>
        <name>substrate</name>
    </ligand>
</feature>
<feature type="binding site" evidence="1">
    <location>
        <position position="130"/>
    </location>
    <ligand>
        <name>Mn(2+)</name>
        <dbReference type="ChEBI" id="CHEBI:29035"/>
    </ligand>
</feature>
<feature type="binding site" evidence="1">
    <location>
        <begin position="132"/>
        <end position="134"/>
    </location>
    <ligand>
        <name>substrate</name>
    </ligand>
</feature>
<organism>
    <name type="scientific">Fervidobacterium nodosum (strain ATCC 35602 / DSM 5306 / Rt17-B1)</name>
    <dbReference type="NCBI Taxonomy" id="381764"/>
    <lineage>
        <taxon>Bacteria</taxon>
        <taxon>Thermotogati</taxon>
        <taxon>Thermotogota</taxon>
        <taxon>Thermotogae</taxon>
        <taxon>Thermotogales</taxon>
        <taxon>Fervidobacteriaceae</taxon>
        <taxon>Fervidobacterium</taxon>
    </lineage>
</organism>
<protein>
    <recommendedName>
        <fullName evidence="1">Pseudouridine-5'-phosphate glycosidase</fullName>
        <shortName evidence="1">PsiMP glycosidase</shortName>
        <ecNumber evidence="1">4.2.1.70</ecNumber>
    </recommendedName>
</protein>
<dbReference type="EC" id="4.2.1.70" evidence="1"/>
<dbReference type="EMBL" id="CP000771">
    <property type="protein sequence ID" value="ABS61034.1"/>
    <property type="molecule type" value="Genomic_DNA"/>
</dbReference>
<dbReference type="RefSeq" id="WP_011994345.1">
    <property type="nucleotide sequence ID" value="NC_009718.1"/>
</dbReference>
<dbReference type="SMR" id="A7HMA1"/>
<dbReference type="STRING" id="381764.Fnod_1187"/>
<dbReference type="KEGG" id="fno:Fnod_1187"/>
<dbReference type="eggNOG" id="COG2313">
    <property type="taxonomic scope" value="Bacteria"/>
</dbReference>
<dbReference type="HOGENOM" id="CLU_012201_0_1_0"/>
<dbReference type="OrthoDB" id="9805870at2"/>
<dbReference type="Proteomes" id="UP000002415">
    <property type="component" value="Chromosome"/>
</dbReference>
<dbReference type="GO" id="GO:0005737">
    <property type="term" value="C:cytoplasm"/>
    <property type="evidence" value="ECO:0007669"/>
    <property type="project" value="TreeGrafter"/>
</dbReference>
<dbReference type="GO" id="GO:0016798">
    <property type="term" value="F:hydrolase activity, acting on glycosyl bonds"/>
    <property type="evidence" value="ECO:0007669"/>
    <property type="project" value="UniProtKB-KW"/>
</dbReference>
<dbReference type="GO" id="GO:0046872">
    <property type="term" value="F:metal ion binding"/>
    <property type="evidence" value="ECO:0007669"/>
    <property type="project" value="UniProtKB-KW"/>
</dbReference>
<dbReference type="GO" id="GO:0004730">
    <property type="term" value="F:pseudouridylate synthase activity"/>
    <property type="evidence" value="ECO:0007669"/>
    <property type="project" value="UniProtKB-UniRule"/>
</dbReference>
<dbReference type="GO" id="GO:0046113">
    <property type="term" value="P:nucleobase catabolic process"/>
    <property type="evidence" value="ECO:0007669"/>
    <property type="project" value="UniProtKB-UniRule"/>
</dbReference>
<dbReference type="Gene3D" id="3.40.1790.10">
    <property type="entry name" value="Indigoidine synthase domain"/>
    <property type="match status" value="1"/>
</dbReference>
<dbReference type="HAMAP" id="MF_01876">
    <property type="entry name" value="PsiMP_glycosidase"/>
    <property type="match status" value="1"/>
</dbReference>
<dbReference type="InterPro" id="IPR022830">
    <property type="entry name" value="Indigdn_synthA-like"/>
</dbReference>
<dbReference type="InterPro" id="IPR007342">
    <property type="entry name" value="PsuG"/>
</dbReference>
<dbReference type="PANTHER" id="PTHR42909:SF1">
    <property type="entry name" value="CARBOHYDRATE KINASE PFKB DOMAIN-CONTAINING PROTEIN"/>
    <property type="match status" value="1"/>
</dbReference>
<dbReference type="PANTHER" id="PTHR42909">
    <property type="entry name" value="ZGC:136858"/>
    <property type="match status" value="1"/>
</dbReference>
<dbReference type="Pfam" id="PF04227">
    <property type="entry name" value="Indigoidine_A"/>
    <property type="match status" value="1"/>
</dbReference>
<dbReference type="SUPFAM" id="SSF110581">
    <property type="entry name" value="Indigoidine synthase A-like"/>
    <property type="match status" value="1"/>
</dbReference>
<accession>A7HMA1</accession>